<reference key="1">
    <citation type="submission" date="2006-09" db="EMBL/GenBank/DDBJ databases">
        <title>Complete sequence of Rhodopseudomonas palustris BisA53.</title>
        <authorList>
            <consortium name="US DOE Joint Genome Institute"/>
            <person name="Copeland A."/>
            <person name="Lucas S."/>
            <person name="Lapidus A."/>
            <person name="Barry K."/>
            <person name="Detter J.C."/>
            <person name="Glavina del Rio T."/>
            <person name="Hammon N."/>
            <person name="Israni S."/>
            <person name="Dalin E."/>
            <person name="Tice H."/>
            <person name="Pitluck S."/>
            <person name="Chain P."/>
            <person name="Malfatti S."/>
            <person name="Shin M."/>
            <person name="Vergez L."/>
            <person name="Schmutz J."/>
            <person name="Larimer F."/>
            <person name="Land M."/>
            <person name="Hauser L."/>
            <person name="Pelletier D.A."/>
            <person name="Kyrpides N."/>
            <person name="Kim E."/>
            <person name="Harwood C.S."/>
            <person name="Oda Y."/>
            <person name="Richardson P."/>
        </authorList>
    </citation>
    <scope>NUCLEOTIDE SEQUENCE [LARGE SCALE GENOMIC DNA]</scope>
    <source>
        <strain>BisA53</strain>
    </source>
</reference>
<comment type="function">
    <text evidence="1">Catalyzes the synthesis of the hydroxymethylpyrimidine phosphate (HMP-P) moiety of thiamine from aminoimidazole ribotide (AIR) in a radical S-adenosyl-L-methionine (SAM)-dependent reaction.</text>
</comment>
<comment type="catalytic activity">
    <reaction evidence="1">
        <text>5-amino-1-(5-phospho-beta-D-ribosyl)imidazole + S-adenosyl-L-methionine = 4-amino-2-methyl-5-(phosphooxymethyl)pyrimidine + CO + 5'-deoxyadenosine + formate + L-methionine + 3 H(+)</text>
        <dbReference type="Rhea" id="RHEA:24840"/>
        <dbReference type="ChEBI" id="CHEBI:15378"/>
        <dbReference type="ChEBI" id="CHEBI:15740"/>
        <dbReference type="ChEBI" id="CHEBI:17245"/>
        <dbReference type="ChEBI" id="CHEBI:17319"/>
        <dbReference type="ChEBI" id="CHEBI:57844"/>
        <dbReference type="ChEBI" id="CHEBI:58354"/>
        <dbReference type="ChEBI" id="CHEBI:59789"/>
        <dbReference type="ChEBI" id="CHEBI:137981"/>
        <dbReference type="EC" id="4.1.99.17"/>
    </reaction>
</comment>
<comment type="cofactor">
    <cofactor evidence="1">
        <name>[4Fe-4S] cluster</name>
        <dbReference type="ChEBI" id="CHEBI:49883"/>
    </cofactor>
    <text evidence="1">Binds 1 [4Fe-4S] cluster per subunit. The cluster is coordinated with 3 cysteines and an exchangeable S-adenosyl-L-methionine.</text>
</comment>
<comment type="pathway">
    <text evidence="1">Cofactor biosynthesis; thiamine diphosphate biosynthesis.</text>
</comment>
<comment type="subunit">
    <text evidence="1">Homodimer.</text>
</comment>
<comment type="similarity">
    <text evidence="1">Belongs to the ThiC family.</text>
</comment>
<name>THIC_RHOP5</name>
<feature type="chain" id="PRO_1000004798" description="Phosphomethylpyrimidine synthase">
    <location>
        <begin position="1"/>
        <end position="641"/>
    </location>
</feature>
<feature type="binding site" evidence="1">
    <location>
        <position position="221"/>
    </location>
    <ligand>
        <name>substrate</name>
    </ligand>
</feature>
<feature type="binding site" evidence="1">
    <location>
        <position position="250"/>
    </location>
    <ligand>
        <name>substrate</name>
    </ligand>
</feature>
<feature type="binding site" evidence="1">
    <location>
        <position position="279"/>
    </location>
    <ligand>
        <name>substrate</name>
    </ligand>
</feature>
<feature type="binding site" evidence="1">
    <location>
        <position position="315"/>
    </location>
    <ligand>
        <name>substrate</name>
    </ligand>
</feature>
<feature type="binding site" evidence="1">
    <location>
        <begin position="335"/>
        <end position="337"/>
    </location>
    <ligand>
        <name>substrate</name>
    </ligand>
</feature>
<feature type="binding site" evidence="1">
    <location>
        <begin position="376"/>
        <end position="379"/>
    </location>
    <ligand>
        <name>substrate</name>
    </ligand>
</feature>
<feature type="binding site" evidence="1">
    <location>
        <position position="415"/>
    </location>
    <ligand>
        <name>substrate</name>
    </ligand>
</feature>
<feature type="binding site" evidence="1">
    <location>
        <position position="419"/>
    </location>
    <ligand>
        <name>Zn(2+)</name>
        <dbReference type="ChEBI" id="CHEBI:29105"/>
    </ligand>
</feature>
<feature type="binding site" evidence="1">
    <location>
        <position position="442"/>
    </location>
    <ligand>
        <name>substrate</name>
    </ligand>
</feature>
<feature type="binding site" evidence="1">
    <location>
        <position position="483"/>
    </location>
    <ligand>
        <name>Zn(2+)</name>
        <dbReference type="ChEBI" id="CHEBI:29105"/>
    </ligand>
</feature>
<feature type="binding site" evidence="1">
    <location>
        <position position="563"/>
    </location>
    <ligand>
        <name>[4Fe-4S] cluster</name>
        <dbReference type="ChEBI" id="CHEBI:49883"/>
        <note>4Fe-4S-S-AdoMet</note>
    </ligand>
</feature>
<feature type="binding site" evidence="1">
    <location>
        <position position="566"/>
    </location>
    <ligand>
        <name>[4Fe-4S] cluster</name>
        <dbReference type="ChEBI" id="CHEBI:49883"/>
        <note>4Fe-4S-S-AdoMet</note>
    </ligand>
</feature>
<feature type="binding site" evidence="1">
    <location>
        <position position="571"/>
    </location>
    <ligand>
        <name>[4Fe-4S] cluster</name>
        <dbReference type="ChEBI" id="CHEBI:49883"/>
        <note>4Fe-4S-S-AdoMet</note>
    </ligand>
</feature>
<gene>
    <name evidence="1" type="primary">thiC</name>
    <name type="ordered locus">RPE_2069</name>
</gene>
<dbReference type="EC" id="4.1.99.17" evidence="1"/>
<dbReference type="EMBL" id="CP000463">
    <property type="protein sequence ID" value="ABJ06013.1"/>
    <property type="molecule type" value="Genomic_DNA"/>
</dbReference>
<dbReference type="SMR" id="Q07PX1"/>
<dbReference type="STRING" id="316055.RPE_2069"/>
<dbReference type="KEGG" id="rpe:RPE_2069"/>
<dbReference type="eggNOG" id="COG0422">
    <property type="taxonomic scope" value="Bacteria"/>
</dbReference>
<dbReference type="HOGENOM" id="CLU_013181_2_1_5"/>
<dbReference type="OrthoDB" id="9805897at2"/>
<dbReference type="UniPathway" id="UPA00060"/>
<dbReference type="GO" id="GO:0005829">
    <property type="term" value="C:cytosol"/>
    <property type="evidence" value="ECO:0007669"/>
    <property type="project" value="TreeGrafter"/>
</dbReference>
<dbReference type="GO" id="GO:0051539">
    <property type="term" value="F:4 iron, 4 sulfur cluster binding"/>
    <property type="evidence" value="ECO:0007669"/>
    <property type="project" value="UniProtKB-KW"/>
</dbReference>
<dbReference type="GO" id="GO:0016830">
    <property type="term" value="F:carbon-carbon lyase activity"/>
    <property type="evidence" value="ECO:0007669"/>
    <property type="project" value="InterPro"/>
</dbReference>
<dbReference type="GO" id="GO:0008270">
    <property type="term" value="F:zinc ion binding"/>
    <property type="evidence" value="ECO:0007669"/>
    <property type="project" value="UniProtKB-UniRule"/>
</dbReference>
<dbReference type="GO" id="GO:0009228">
    <property type="term" value="P:thiamine biosynthetic process"/>
    <property type="evidence" value="ECO:0007669"/>
    <property type="project" value="UniProtKB-KW"/>
</dbReference>
<dbReference type="GO" id="GO:0009229">
    <property type="term" value="P:thiamine diphosphate biosynthetic process"/>
    <property type="evidence" value="ECO:0007669"/>
    <property type="project" value="UniProtKB-UniRule"/>
</dbReference>
<dbReference type="FunFam" id="3.20.20.540:FF:000001">
    <property type="entry name" value="Phosphomethylpyrimidine synthase"/>
    <property type="match status" value="1"/>
</dbReference>
<dbReference type="Gene3D" id="6.10.250.620">
    <property type="match status" value="1"/>
</dbReference>
<dbReference type="Gene3D" id="3.20.20.540">
    <property type="entry name" value="Radical SAM ThiC family, central domain"/>
    <property type="match status" value="1"/>
</dbReference>
<dbReference type="HAMAP" id="MF_00089">
    <property type="entry name" value="ThiC"/>
    <property type="match status" value="1"/>
</dbReference>
<dbReference type="InterPro" id="IPR037509">
    <property type="entry name" value="ThiC"/>
</dbReference>
<dbReference type="InterPro" id="IPR025747">
    <property type="entry name" value="ThiC-associated_dom"/>
</dbReference>
<dbReference type="InterPro" id="IPR038521">
    <property type="entry name" value="ThiC/Bza_core_dom"/>
</dbReference>
<dbReference type="InterPro" id="IPR002817">
    <property type="entry name" value="ThiC/BzaA/B"/>
</dbReference>
<dbReference type="NCBIfam" id="NF006763">
    <property type="entry name" value="PRK09284.1"/>
    <property type="match status" value="1"/>
</dbReference>
<dbReference type="NCBIfam" id="NF009895">
    <property type="entry name" value="PRK13352.1"/>
    <property type="match status" value="1"/>
</dbReference>
<dbReference type="NCBIfam" id="TIGR00190">
    <property type="entry name" value="thiC"/>
    <property type="match status" value="1"/>
</dbReference>
<dbReference type="PANTHER" id="PTHR30557:SF1">
    <property type="entry name" value="PHOSPHOMETHYLPYRIMIDINE SYNTHASE, CHLOROPLASTIC"/>
    <property type="match status" value="1"/>
</dbReference>
<dbReference type="PANTHER" id="PTHR30557">
    <property type="entry name" value="THIAMINE BIOSYNTHESIS PROTEIN THIC"/>
    <property type="match status" value="1"/>
</dbReference>
<dbReference type="Pfam" id="PF13667">
    <property type="entry name" value="ThiC-associated"/>
    <property type="match status" value="1"/>
</dbReference>
<dbReference type="Pfam" id="PF01964">
    <property type="entry name" value="ThiC_Rad_SAM"/>
    <property type="match status" value="1"/>
</dbReference>
<dbReference type="SFLD" id="SFLDF00407">
    <property type="entry name" value="phosphomethylpyrimidine_syntha"/>
    <property type="match status" value="1"/>
</dbReference>
<dbReference type="SFLD" id="SFLDG01114">
    <property type="entry name" value="phosphomethylpyrimidine_syntha"/>
    <property type="match status" value="1"/>
</dbReference>
<dbReference type="SFLD" id="SFLDS00113">
    <property type="entry name" value="Radical_SAM_Phosphomethylpyrim"/>
    <property type="match status" value="1"/>
</dbReference>
<sequence length="641" mass="70625">MNIRSNPDTTRPAVTTGALPSSQKIYVTPDAAPDLRVPLREIILSKEAAEPNLPVYDTTGPYTDPAITIDVNAGLKRPRTQWVLERGGVEQYQGREIKPIDNGNVSGEHAAAAFKAYHQPLRGVGDSPITQYEFARKGIITKEMIYVATRENLGRKQQLERAEAALADGESFGAAIPAFITPEFVRDEIARGRAIIPANINHGELEPMIIGRNFLTKINANIGNSAVTSSVEEEVDKMVWAIRWGADTVMDLSTGRNIHTTREWILRNAPIPIGTVPIYQALEKCDGDPVKLTWELYKDTLIEQCEQGVDYFTIHAGVRLAYIHLTANRVTGIVSRGGSIMAKWCLAHHQESFLYTHFDEICDLMRKYDVSFSLGDGLRPGSIADANDRAQFAELETLGELTKIAWDKGCQVMIEGPGHVPLHKIKINMDKQLKECGEAPFYTLGPLTTDIAPGYDHITSGIGAAMIGWFGCAMLCYVTPKEHLGLPDRNDVKVGVITYKIAAHASDLAKGHPAAQLRDDAVSRARFDFRWQDQFNLGLDPDTAKAFHDETLPKDAHKVAHFCSMCGPKFCSMKITQDVRDYAAGLGDNEKAALYPAGHVGMTISGVIEDGMAQMSAKFRDMGEELYLDAEKVKESNRALS</sequence>
<proteinExistence type="inferred from homology"/>
<accession>Q07PX1</accession>
<keyword id="KW-0004">4Fe-4S</keyword>
<keyword id="KW-0408">Iron</keyword>
<keyword id="KW-0411">Iron-sulfur</keyword>
<keyword id="KW-0456">Lyase</keyword>
<keyword id="KW-0479">Metal-binding</keyword>
<keyword id="KW-0949">S-adenosyl-L-methionine</keyword>
<keyword id="KW-0784">Thiamine biosynthesis</keyword>
<keyword id="KW-0862">Zinc</keyword>
<protein>
    <recommendedName>
        <fullName evidence="1">Phosphomethylpyrimidine synthase</fullName>
        <ecNumber evidence="1">4.1.99.17</ecNumber>
    </recommendedName>
    <alternativeName>
        <fullName evidence="1">Hydroxymethylpyrimidine phosphate synthase</fullName>
        <shortName evidence="1">HMP-P synthase</shortName>
        <shortName evidence="1">HMP-phosphate synthase</shortName>
        <shortName evidence="1">HMPP synthase</shortName>
    </alternativeName>
    <alternativeName>
        <fullName evidence="1">Thiamine biosynthesis protein ThiC</fullName>
    </alternativeName>
</protein>
<evidence type="ECO:0000255" key="1">
    <source>
        <dbReference type="HAMAP-Rule" id="MF_00089"/>
    </source>
</evidence>
<organism>
    <name type="scientific">Rhodopseudomonas palustris (strain BisA53)</name>
    <dbReference type="NCBI Taxonomy" id="316055"/>
    <lineage>
        <taxon>Bacteria</taxon>
        <taxon>Pseudomonadati</taxon>
        <taxon>Pseudomonadota</taxon>
        <taxon>Alphaproteobacteria</taxon>
        <taxon>Hyphomicrobiales</taxon>
        <taxon>Nitrobacteraceae</taxon>
        <taxon>Rhodopseudomonas</taxon>
    </lineage>
</organism>